<dbReference type="EMBL" id="CP000967">
    <property type="protein sequence ID" value="ACD58166.1"/>
    <property type="molecule type" value="Genomic_DNA"/>
</dbReference>
<dbReference type="RefSeq" id="WP_003484323.1">
    <property type="nucleotide sequence ID" value="NC_010717.2"/>
</dbReference>
<dbReference type="SMR" id="B2STC1"/>
<dbReference type="GeneID" id="97509601"/>
<dbReference type="KEGG" id="xop:PXO_00014"/>
<dbReference type="eggNOG" id="COG0268">
    <property type="taxonomic scope" value="Bacteria"/>
</dbReference>
<dbReference type="HOGENOM" id="CLU_160655_4_0_6"/>
<dbReference type="Proteomes" id="UP000001740">
    <property type="component" value="Chromosome"/>
</dbReference>
<dbReference type="GO" id="GO:0005829">
    <property type="term" value="C:cytosol"/>
    <property type="evidence" value="ECO:0007669"/>
    <property type="project" value="TreeGrafter"/>
</dbReference>
<dbReference type="GO" id="GO:0015935">
    <property type="term" value="C:small ribosomal subunit"/>
    <property type="evidence" value="ECO:0007669"/>
    <property type="project" value="TreeGrafter"/>
</dbReference>
<dbReference type="GO" id="GO:0070181">
    <property type="term" value="F:small ribosomal subunit rRNA binding"/>
    <property type="evidence" value="ECO:0007669"/>
    <property type="project" value="TreeGrafter"/>
</dbReference>
<dbReference type="GO" id="GO:0003735">
    <property type="term" value="F:structural constituent of ribosome"/>
    <property type="evidence" value="ECO:0007669"/>
    <property type="project" value="InterPro"/>
</dbReference>
<dbReference type="GO" id="GO:0006412">
    <property type="term" value="P:translation"/>
    <property type="evidence" value="ECO:0007669"/>
    <property type="project" value="UniProtKB-UniRule"/>
</dbReference>
<dbReference type="FunFam" id="1.20.58.110:FF:000001">
    <property type="entry name" value="30S ribosomal protein S20"/>
    <property type="match status" value="1"/>
</dbReference>
<dbReference type="Gene3D" id="1.20.58.110">
    <property type="entry name" value="Ribosomal protein S20"/>
    <property type="match status" value="1"/>
</dbReference>
<dbReference type="HAMAP" id="MF_00500">
    <property type="entry name" value="Ribosomal_bS20"/>
    <property type="match status" value="1"/>
</dbReference>
<dbReference type="InterPro" id="IPR002583">
    <property type="entry name" value="Ribosomal_bS20"/>
</dbReference>
<dbReference type="InterPro" id="IPR036510">
    <property type="entry name" value="Ribosomal_bS20_sf"/>
</dbReference>
<dbReference type="NCBIfam" id="TIGR00029">
    <property type="entry name" value="S20"/>
    <property type="match status" value="1"/>
</dbReference>
<dbReference type="PANTHER" id="PTHR33398">
    <property type="entry name" value="30S RIBOSOMAL PROTEIN S20"/>
    <property type="match status" value="1"/>
</dbReference>
<dbReference type="PANTHER" id="PTHR33398:SF1">
    <property type="entry name" value="SMALL RIBOSOMAL SUBUNIT PROTEIN BS20C"/>
    <property type="match status" value="1"/>
</dbReference>
<dbReference type="Pfam" id="PF01649">
    <property type="entry name" value="Ribosomal_S20p"/>
    <property type="match status" value="1"/>
</dbReference>
<dbReference type="SUPFAM" id="SSF46992">
    <property type="entry name" value="Ribosomal protein S20"/>
    <property type="match status" value="1"/>
</dbReference>
<sequence>MANIKSAKKRAKQTIVRNERNTGQRSMLRTAVKKVIKALDANDAAGAEAAFAVAQPILDRFSARGLIHKNKAARHKSRLTARIKAIKAA</sequence>
<proteinExistence type="inferred from homology"/>
<comment type="function">
    <text evidence="1">Binds directly to 16S ribosomal RNA.</text>
</comment>
<comment type="similarity">
    <text evidence="1">Belongs to the bacterial ribosomal protein bS20 family.</text>
</comment>
<keyword id="KW-0687">Ribonucleoprotein</keyword>
<keyword id="KW-0689">Ribosomal protein</keyword>
<keyword id="KW-0694">RNA-binding</keyword>
<keyword id="KW-0699">rRNA-binding</keyword>
<protein>
    <recommendedName>
        <fullName evidence="1">Small ribosomal subunit protein bS20</fullName>
    </recommendedName>
    <alternativeName>
        <fullName evidence="3">30S ribosomal protein S20</fullName>
    </alternativeName>
</protein>
<evidence type="ECO:0000255" key="1">
    <source>
        <dbReference type="HAMAP-Rule" id="MF_00500"/>
    </source>
</evidence>
<evidence type="ECO:0000256" key="2">
    <source>
        <dbReference type="SAM" id="MobiDB-lite"/>
    </source>
</evidence>
<evidence type="ECO:0000305" key="3"/>
<accession>B2STC1</accession>
<feature type="chain" id="PRO_1000126535" description="Small ribosomal subunit protein bS20">
    <location>
        <begin position="1"/>
        <end position="89"/>
    </location>
</feature>
<feature type="region of interest" description="Disordered" evidence="2">
    <location>
        <begin position="1"/>
        <end position="22"/>
    </location>
</feature>
<feature type="compositionally biased region" description="Basic residues" evidence="2">
    <location>
        <begin position="1"/>
        <end position="12"/>
    </location>
</feature>
<organism>
    <name type="scientific">Xanthomonas oryzae pv. oryzae (strain PXO99A)</name>
    <dbReference type="NCBI Taxonomy" id="360094"/>
    <lineage>
        <taxon>Bacteria</taxon>
        <taxon>Pseudomonadati</taxon>
        <taxon>Pseudomonadota</taxon>
        <taxon>Gammaproteobacteria</taxon>
        <taxon>Lysobacterales</taxon>
        <taxon>Lysobacteraceae</taxon>
        <taxon>Xanthomonas</taxon>
    </lineage>
</organism>
<gene>
    <name evidence="1" type="primary">rpsT</name>
    <name type="ordered locus">PXO_00014</name>
</gene>
<name>RS20_XANOP</name>
<reference key="1">
    <citation type="journal article" date="2008" name="BMC Genomics">
        <title>Genome sequence and rapid evolution of the rice pathogen Xanthomonas oryzae pv. oryzae PXO99A.</title>
        <authorList>
            <person name="Salzberg S.L."/>
            <person name="Sommer D.D."/>
            <person name="Schatz M.C."/>
            <person name="Phillippy A.M."/>
            <person name="Rabinowicz P.D."/>
            <person name="Tsuge S."/>
            <person name="Furutani A."/>
            <person name="Ochiai H."/>
            <person name="Delcher A.L."/>
            <person name="Kelley D."/>
            <person name="Madupu R."/>
            <person name="Puiu D."/>
            <person name="Radune D."/>
            <person name="Shumway M."/>
            <person name="Trapnell C."/>
            <person name="Aparna G."/>
            <person name="Jha G."/>
            <person name="Pandey A."/>
            <person name="Patil P.B."/>
            <person name="Ishihara H."/>
            <person name="Meyer D.F."/>
            <person name="Szurek B."/>
            <person name="Verdier V."/>
            <person name="Koebnik R."/>
            <person name="Dow J.M."/>
            <person name="Ryan R.P."/>
            <person name="Hirata H."/>
            <person name="Tsuyumu S."/>
            <person name="Won Lee S."/>
            <person name="Seo Y.-S."/>
            <person name="Sriariyanum M."/>
            <person name="Ronald P.C."/>
            <person name="Sonti R.V."/>
            <person name="Van Sluys M.-A."/>
            <person name="Leach J.E."/>
            <person name="White F.F."/>
            <person name="Bogdanove A.J."/>
        </authorList>
    </citation>
    <scope>NUCLEOTIDE SEQUENCE [LARGE SCALE GENOMIC DNA]</scope>
    <source>
        <strain>PXO99A</strain>
    </source>
</reference>